<sequence length="447" mass="46295">MNSQQIYETSHMISNENLDVRTITMGISLLDCIDSDSTVACQKIYDKITTKAKNLVKVGQQIEAEYGIPIANKRVTVTPISLIAAASQDHDYVKYAKTLDKAAKTLGIDFIGGYSALVQKGYQTGDRTLIASLPEALAETDFVCASVNVGSTRSGINMDAVAQMGEVVVAGSKLDMMTNAKLVIFCNAVEDNPFMAGGFHGVGEPDVVINVGVSGPGVIKTALEKVKGESMDVVAETIKKTAFKVTRMGQLVGTVGAERLGVQFGIVDLSLAPTAAAGDSVAEVLEEIGVAQVGTHGTTAALAMLNDAVKKGGIMACSHVGGLSGAFIPVSEDAGMIKAVNAGTLNISKLEAMTAVCSVGLDMIAIPGDTPKETISAMIADEAAIGMINNKTTAVRVIPAPGKKVGDTVEFGGLLGYAPVMAVNKVASTAMINRGGLIPAPIHSFKN</sequence>
<proteinExistence type="inferred from homology"/>
<reference key="1">
    <citation type="journal article" date="2008" name="DNA Res.">
        <title>Comparative genome analysis of Lactobacillus reuteri and Lactobacillus fermentum reveal a genomic island for reuterin and cobalamin production.</title>
        <authorList>
            <person name="Morita H."/>
            <person name="Toh H."/>
            <person name="Fukuda S."/>
            <person name="Horikawa H."/>
            <person name="Oshima K."/>
            <person name="Suzuki T."/>
            <person name="Murakami M."/>
            <person name="Hisamatsu S."/>
            <person name="Kato Y."/>
            <person name="Takizawa T."/>
            <person name="Fukuoka H."/>
            <person name="Yoshimura T."/>
            <person name="Itoh K."/>
            <person name="O'Sullivan D.J."/>
            <person name="McKay L.L."/>
            <person name="Ohno H."/>
            <person name="Kikuchi J."/>
            <person name="Masaoka T."/>
            <person name="Hattori M."/>
        </authorList>
    </citation>
    <scope>NUCLEOTIDE SEQUENCE [LARGE SCALE GENOMIC DNA]</scope>
    <source>
        <strain>JCM 1112</strain>
    </source>
</reference>
<feature type="chain" id="PRO_1000139229" description="UPF0210 protein LAR_0886">
    <location>
        <begin position="1"/>
        <end position="447"/>
    </location>
</feature>
<organism>
    <name type="scientific">Limosilactobacillus reuteri subsp. reuteri (strain JCM 1112)</name>
    <name type="common">Lactobacillus reuteri</name>
    <dbReference type="NCBI Taxonomy" id="557433"/>
    <lineage>
        <taxon>Bacteria</taxon>
        <taxon>Bacillati</taxon>
        <taxon>Bacillota</taxon>
        <taxon>Bacilli</taxon>
        <taxon>Lactobacillales</taxon>
        <taxon>Lactobacillaceae</taxon>
        <taxon>Limosilactobacillus</taxon>
    </lineage>
</organism>
<name>Y886_LIMRJ</name>
<dbReference type="EMBL" id="AP007281">
    <property type="protein sequence ID" value="BAG25402.1"/>
    <property type="molecule type" value="Genomic_DNA"/>
</dbReference>
<dbReference type="RefSeq" id="WP_003667841.1">
    <property type="nucleotide sequence ID" value="NC_010609.1"/>
</dbReference>
<dbReference type="SMR" id="B2G7H0"/>
<dbReference type="KEGG" id="lrf:LAR_0886"/>
<dbReference type="HOGENOM" id="CLU_048704_0_0_9"/>
<dbReference type="CDD" id="cd08025">
    <property type="entry name" value="RNR_PFL_like_DUF711"/>
    <property type="match status" value="1"/>
</dbReference>
<dbReference type="Gene3D" id="3.20.70.20">
    <property type="match status" value="1"/>
</dbReference>
<dbReference type="HAMAP" id="MF_01221">
    <property type="entry name" value="UPF0210"/>
    <property type="match status" value="1"/>
</dbReference>
<dbReference type="InterPro" id="IPR007841">
    <property type="entry name" value="UPF0210"/>
</dbReference>
<dbReference type="NCBIfam" id="NF003700">
    <property type="entry name" value="PRK05313.1"/>
    <property type="match status" value="1"/>
</dbReference>
<dbReference type="PANTHER" id="PTHR37560:SF1">
    <property type="entry name" value="UPF0210 PROTEIN MJ1665"/>
    <property type="match status" value="1"/>
</dbReference>
<dbReference type="PANTHER" id="PTHR37560">
    <property type="entry name" value="UPF0210 PROTEIN SPR0218"/>
    <property type="match status" value="1"/>
</dbReference>
<dbReference type="Pfam" id="PF05167">
    <property type="entry name" value="DUF711"/>
    <property type="match status" value="1"/>
</dbReference>
<dbReference type="SUPFAM" id="SSF51998">
    <property type="entry name" value="PFL-like glycyl radical enzymes"/>
    <property type="match status" value="1"/>
</dbReference>
<gene>
    <name type="ordered locus">LAR_0886</name>
</gene>
<comment type="subunit">
    <text evidence="1">Homodimer.</text>
</comment>
<comment type="similarity">
    <text evidence="1">Belongs to the UPF0210 family.</text>
</comment>
<protein>
    <recommendedName>
        <fullName evidence="1">UPF0210 protein LAR_0886</fullName>
    </recommendedName>
</protein>
<accession>B2G7H0</accession>
<evidence type="ECO:0000255" key="1">
    <source>
        <dbReference type="HAMAP-Rule" id="MF_01221"/>
    </source>
</evidence>